<dbReference type="EC" id="3.1.1.5"/>
<dbReference type="EMBL" id="Z97187">
    <property type="protein sequence ID" value="CAB51772.1"/>
    <property type="molecule type" value="mRNA"/>
</dbReference>
<dbReference type="EMBL" id="AE014298">
    <property type="protein sequence ID" value="AAF46305.3"/>
    <property type="molecule type" value="Genomic_DNA"/>
</dbReference>
<dbReference type="EMBL" id="AE014298">
    <property type="protein sequence ID" value="AAN09223.1"/>
    <property type="molecule type" value="Genomic_DNA"/>
</dbReference>
<dbReference type="EMBL" id="BT030819">
    <property type="protein sequence ID" value="ABV82201.1"/>
    <property type="molecule type" value="mRNA"/>
</dbReference>
<dbReference type="EMBL" id="AY061431">
    <property type="protein sequence ID" value="AAL28979.1"/>
    <property type="status" value="ALT_INIT"/>
    <property type="molecule type" value="mRNA"/>
</dbReference>
<dbReference type="RefSeq" id="NP_511075.3">
    <molecule id="Q9U969-1"/>
    <property type="nucleotide sequence ID" value="NM_078520.3"/>
</dbReference>
<dbReference type="RefSeq" id="NP_727225.1">
    <molecule id="Q9U969-2"/>
    <property type="nucleotide sequence ID" value="NM_167141.3"/>
</dbReference>
<dbReference type="SMR" id="Q9U969"/>
<dbReference type="BioGRID" id="58188">
    <property type="interactions" value="8"/>
</dbReference>
<dbReference type="FunCoup" id="Q9U969">
    <property type="interactions" value="518"/>
</dbReference>
<dbReference type="IntAct" id="Q9U969">
    <property type="interactions" value="3"/>
</dbReference>
<dbReference type="STRING" id="7227.FBpp0071077"/>
<dbReference type="iPTMnet" id="Q9U969"/>
<dbReference type="PaxDb" id="7227-FBpp0071077"/>
<dbReference type="DNASU" id="31716"/>
<dbReference type="EnsemblMetazoa" id="FBtr0071125">
    <molecule id="Q9U969-1"/>
    <property type="protein sequence ID" value="FBpp0071077"/>
    <property type="gene ID" value="FBgn0003656"/>
</dbReference>
<dbReference type="EnsemblMetazoa" id="FBtr0071126">
    <molecule id="Q9U969-2"/>
    <property type="protein sequence ID" value="FBpp0071078"/>
    <property type="gene ID" value="FBgn0003656"/>
</dbReference>
<dbReference type="GeneID" id="31716"/>
<dbReference type="KEGG" id="dme:Dmel_CG2212"/>
<dbReference type="UCSC" id="CG2212-RB">
    <property type="organism name" value="d. melanogaster"/>
</dbReference>
<dbReference type="AGR" id="FB:FBgn0003656"/>
<dbReference type="CTD" id="31716"/>
<dbReference type="FlyBase" id="FBgn0003656">
    <property type="gene designation" value="sws"/>
</dbReference>
<dbReference type="VEuPathDB" id="VectorBase:FBgn0003656"/>
<dbReference type="eggNOG" id="KOG2968">
    <property type="taxonomic scope" value="Eukaryota"/>
</dbReference>
<dbReference type="GeneTree" id="ENSGT00940000168388"/>
<dbReference type="HOGENOM" id="CLU_000960_1_0_1"/>
<dbReference type="InParanoid" id="Q9U969"/>
<dbReference type="OMA" id="GQQEDRH"/>
<dbReference type="OrthoDB" id="421051at2759"/>
<dbReference type="PhylomeDB" id="Q9U969"/>
<dbReference type="Reactome" id="R-DME-6814848">
    <property type="pathway name" value="Glycerophospholipid catabolism"/>
</dbReference>
<dbReference type="BioGRID-ORCS" id="31716">
    <property type="hits" value="0 hits in 3 CRISPR screens"/>
</dbReference>
<dbReference type="GenomeRNAi" id="31716"/>
<dbReference type="PRO" id="PR:Q9U969"/>
<dbReference type="Proteomes" id="UP000000803">
    <property type="component" value="Chromosome X"/>
</dbReference>
<dbReference type="Bgee" id="FBgn0003656">
    <property type="expression patterns" value="Expressed in dorsal appendage forming follicle cell in ovary and 261 other cell types or tissues"/>
</dbReference>
<dbReference type="ExpressionAtlas" id="Q9U969">
    <property type="expression patterns" value="baseline and differential"/>
</dbReference>
<dbReference type="GO" id="GO:0005737">
    <property type="term" value="C:cytoplasm"/>
    <property type="evidence" value="ECO:0000314"/>
    <property type="project" value="FlyBase"/>
</dbReference>
<dbReference type="GO" id="GO:0005783">
    <property type="term" value="C:endoplasmic reticulum"/>
    <property type="evidence" value="ECO:0000318"/>
    <property type="project" value="GO_Central"/>
</dbReference>
<dbReference type="GO" id="GO:0005789">
    <property type="term" value="C:endoplasmic reticulum membrane"/>
    <property type="evidence" value="ECO:0000314"/>
    <property type="project" value="UniProtKB"/>
</dbReference>
<dbReference type="GO" id="GO:0005886">
    <property type="term" value="C:plasma membrane"/>
    <property type="evidence" value="ECO:0000314"/>
    <property type="project" value="FlyBase"/>
</dbReference>
<dbReference type="GO" id="GO:0004622">
    <property type="term" value="F:lysophospholipase activity"/>
    <property type="evidence" value="ECO:0000314"/>
    <property type="project" value="UniProtKB"/>
</dbReference>
<dbReference type="GO" id="GO:0034236">
    <property type="term" value="F:protein kinase A catalytic subunit binding"/>
    <property type="evidence" value="ECO:0000353"/>
    <property type="project" value="FlyBase"/>
</dbReference>
<dbReference type="GO" id="GO:0007272">
    <property type="term" value="P:ensheathment of neurons"/>
    <property type="evidence" value="ECO:0000315"/>
    <property type="project" value="FlyBase"/>
</dbReference>
<dbReference type="GO" id="GO:0034349">
    <property type="term" value="P:glial cell apoptotic process"/>
    <property type="evidence" value="ECO:0000315"/>
    <property type="project" value="UniProtKB"/>
</dbReference>
<dbReference type="GO" id="GO:0016042">
    <property type="term" value="P:lipid catabolic process"/>
    <property type="evidence" value="ECO:0007669"/>
    <property type="project" value="UniProtKB-KW"/>
</dbReference>
<dbReference type="GO" id="GO:0006643">
    <property type="term" value="P:membrane lipid metabolic process"/>
    <property type="evidence" value="ECO:0000314"/>
    <property type="project" value="FlyBase"/>
</dbReference>
<dbReference type="GO" id="GO:0061024">
    <property type="term" value="P:membrane organization"/>
    <property type="evidence" value="ECO:0000314"/>
    <property type="project" value="FlyBase"/>
</dbReference>
<dbReference type="GO" id="GO:0051402">
    <property type="term" value="P:neuron apoptotic process"/>
    <property type="evidence" value="ECO:0000315"/>
    <property type="project" value="FlyBase"/>
</dbReference>
<dbReference type="GO" id="GO:0046470">
    <property type="term" value="P:phosphatidylcholine metabolic process"/>
    <property type="evidence" value="ECO:0000314"/>
    <property type="project" value="FlyBase"/>
</dbReference>
<dbReference type="GO" id="GO:0006644">
    <property type="term" value="P:phospholipid metabolic process"/>
    <property type="evidence" value="ECO:0000315"/>
    <property type="project" value="FlyBase"/>
</dbReference>
<dbReference type="GO" id="GO:0045494">
    <property type="term" value="P:photoreceptor cell maintenance"/>
    <property type="evidence" value="ECO:0000315"/>
    <property type="project" value="FlyBase"/>
</dbReference>
<dbReference type="GO" id="GO:0072657">
    <property type="term" value="P:protein localization to membrane"/>
    <property type="evidence" value="ECO:0000315"/>
    <property type="project" value="FlyBase"/>
</dbReference>
<dbReference type="GO" id="GO:0007608">
    <property type="term" value="P:sensory perception of smell"/>
    <property type="evidence" value="ECO:0000315"/>
    <property type="project" value="FlyBase"/>
</dbReference>
<dbReference type="CDD" id="cd00038">
    <property type="entry name" value="CAP_ED"/>
    <property type="match status" value="3"/>
</dbReference>
<dbReference type="CDD" id="cd07225">
    <property type="entry name" value="Pat_PNPLA6_PNPLA7"/>
    <property type="match status" value="1"/>
</dbReference>
<dbReference type="FunFam" id="2.60.120.10:FF:000010">
    <property type="entry name" value="neuropathy target esterase isoform X1"/>
    <property type="match status" value="1"/>
</dbReference>
<dbReference type="FunFam" id="3.40.1090.10:FF:000001">
    <property type="entry name" value="neuropathy target esterase isoform X2"/>
    <property type="match status" value="1"/>
</dbReference>
<dbReference type="FunFam" id="2.60.120.10:FF:000122">
    <property type="entry name" value="Neuropathy target esterase sws"/>
    <property type="match status" value="1"/>
</dbReference>
<dbReference type="FunFam" id="2.60.120.10:FF:000135">
    <property type="entry name" value="Neuropathy target esterase sws"/>
    <property type="match status" value="1"/>
</dbReference>
<dbReference type="Gene3D" id="3.40.1090.10">
    <property type="entry name" value="Cytosolic phospholipase A2 catalytic domain"/>
    <property type="match status" value="1"/>
</dbReference>
<dbReference type="Gene3D" id="2.60.120.10">
    <property type="entry name" value="Jelly Rolls"/>
    <property type="match status" value="3"/>
</dbReference>
<dbReference type="InterPro" id="IPR016035">
    <property type="entry name" value="Acyl_Trfase/lysoPLipase"/>
</dbReference>
<dbReference type="InterPro" id="IPR000595">
    <property type="entry name" value="cNMP-bd_dom"/>
</dbReference>
<dbReference type="InterPro" id="IPR018490">
    <property type="entry name" value="cNMP-bd_dom_sf"/>
</dbReference>
<dbReference type="InterPro" id="IPR001423">
    <property type="entry name" value="LysoPLipase_patatin_CS"/>
</dbReference>
<dbReference type="InterPro" id="IPR050301">
    <property type="entry name" value="NTE"/>
</dbReference>
<dbReference type="InterPro" id="IPR056556">
    <property type="entry name" value="NTE1_P-loop_dom"/>
</dbReference>
<dbReference type="InterPro" id="IPR002641">
    <property type="entry name" value="PNPLA_dom"/>
</dbReference>
<dbReference type="InterPro" id="IPR014710">
    <property type="entry name" value="RmlC-like_jellyroll"/>
</dbReference>
<dbReference type="PANTHER" id="PTHR14226:SF29">
    <property type="entry name" value="NEUROPATHY TARGET ESTERASE SWS"/>
    <property type="match status" value="1"/>
</dbReference>
<dbReference type="PANTHER" id="PTHR14226">
    <property type="entry name" value="NEUROPATHY TARGET ESTERASE/SWISS CHEESE D.MELANOGASTER"/>
    <property type="match status" value="1"/>
</dbReference>
<dbReference type="Pfam" id="PF00027">
    <property type="entry name" value="cNMP_binding"/>
    <property type="match status" value="3"/>
</dbReference>
<dbReference type="Pfam" id="PF24179">
    <property type="entry name" value="NTE_Ploop"/>
    <property type="match status" value="1"/>
</dbReference>
<dbReference type="Pfam" id="PF01734">
    <property type="entry name" value="Patatin"/>
    <property type="match status" value="1"/>
</dbReference>
<dbReference type="SMART" id="SM00100">
    <property type="entry name" value="cNMP"/>
    <property type="match status" value="3"/>
</dbReference>
<dbReference type="SUPFAM" id="SSF51206">
    <property type="entry name" value="cAMP-binding domain-like"/>
    <property type="match status" value="3"/>
</dbReference>
<dbReference type="SUPFAM" id="SSF52151">
    <property type="entry name" value="FabD/lysophospholipase-like"/>
    <property type="match status" value="1"/>
</dbReference>
<dbReference type="PROSITE" id="PS50042">
    <property type="entry name" value="CNMP_BINDING_3"/>
    <property type="match status" value="3"/>
</dbReference>
<dbReference type="PROSITE" id="PS51635">
    <property type="entry name" value="PNPLA"/>
    <property type="match status" value="1"/>
</dbReference>
<dbReference type="PROSITE" id="PS01237">
    <property type="entry name" value="UPF0028"/>
    <property type="match status" value="1"/>
</dbReference>
<keyword id="KW-0025">Alternative splicing</keyword>
<keyword id="KW-0217">Developmental protein</keyword>
<keyword id="KW-0256">Endoplasmic reticulum</keyword>
<keyword id="KW-0378">Hydrolase</keyword>
<keyword id="KW-0442">Lipid degradation</keyword>
<keyword id="KW-0443">Lipid metabolism</keyword>
<keyword id="KW-0472">Membrane</keyword>
<keyword id="KW-0524">Neurogenesis</keyword>
<keyword id="KW-0597">Phosphoprotein</keyword>
<keyword id="KW-1185">Reference proteome</keyword>
<keyword id="KW-0812">Transmembrane</keyword>
<keyword id="KW-1133">Transmembrane helix</keyword>
<comment type="function">
    <text evidence="4 6 7">Phospholipase B that deacylates intracellular phosphatidylcholine (PtdCho), generating glycerophosphocholine (GroPtdCho). This deacylation occurs at both sn-2 and sn-1 positions of PtdCho. Its specific chemical modification by certain organophosphorus (OP) compounds leads to distal axonopathy. Plays a role in the signaling mechanism between neurons and glia that regulates glia wrapping during development of the adult brain. Essential for membrane lipid homeostasis and cell survival in both neurons and glia of the adult brain.</text>
</comment>
<comment type="catalytic activity">
    <reaction evidence="4">
        <text>a 1-acyl-sn-glycero-3-phosphocholine + H2O = sn-glycerol 3-phosphocholine + a fatty acid + H(+)</text>
        <dbReference type="Rhea" id="RHEA:15177"/>
        <dbReference type="ChEBI" id="CHEBI:15377"/>
        <dbReference type="ChEBI" id="CHEBI:15378"/>
        <dbReference type="ChEBI" id="CHEBI:16870"/>
        <dbReference type="ChEBI" id="CHEBI:28868"/>
        <dbReference type="ChEBI" id="CHEBI:58168"/>
        <dbReference type="EC" id="3.1.1.5"/>
    </reaction>
</comment>
<comment type="subunit">
    <text evidence="6">Interacts with Pka-C3; interaction inhibits the catalytic function of Pka-C3 and the esterase activity of sws.</text>
</comment>
<comment type="subcellular location">
    <subcellularLocation>
        <location evidence="4 6">Endoplasmic reticulum membrane</location>
        <topology evidence="4 6">Single-pass type I membrane protein</topology>
    </subcellularLocation>
    <text>Sws tethers Pka-C3 to the membrane.</text>
</comment>
<comment type="alternative products">
    <event type="alternative splicing"/>
    <isoform>
        <id>Q9U969-1</id>
        <name>A</name>
        <name>Long</name>
        <sequence type="displayed"/>
    </isoform>
    <isoform>
        <id>Q9U969-2</id>
        <name>B</name>
        <name>Short</name>
        <sequence type="described" ref="VSP_038398 VSP_038399 VSP_038400"/>
    </isoform>
    <isoform>
        <id>Q9U969-3</id>
        <name>C</name>
        <sequence type="described" ref="VSP_038399 VSP_038400"/>
    </isoform>
</comment>
<comment type="tissue specificity">
    <text evidence="4 6 7">Isoform A and isoform B are expressed in the entire brain cortex; cortical cell bodies of adult brain. Sws and Pka-C3 are colocalized in all neurons.</text>
</comment>
<comment type="developmental stage">
    <text evidence="7">Isoform A is expressed in all developmental stages with highest levels in young embryos and adults. Isoform B is detected only in adult head.</text>
</comment>
<comment type="disruption phenotype">
    <text evidence="6">Progressive degeneration of the adult nervous system, associated with apoptotic cell death, glial hyperwrapping, and neuronal apoptosis. Also, vacuolization in the neuropil.</text>
</comment>
<comment type="similarity">
    <text evidence="9">Belongs to the NTE family.</text>
</comment>
<comment type="sequence caution" evidence="9">
    <conflict type="erroneous initiation">
        <sequence resource="EMBL-CDS" id="AAL28979"/>
    </conflict>
</comment>
<organism>
    <name type="scientific">Drosophila melanogaster</name>
    <name type="common">Fruit fly</name>
    <dbReference type="NCBI Taxonomy" id="7227"/>
    <lineage>
        <taxon>Eukaryota</taxon>
        <taxon>Metazoa</taxon>
        <taxon>Ecdysozoa</taxon>
        <taxon>Arthropoda</taxon>
        <taxon>Hexapoda</taxon>
        <taxon>Insecta</taxon>
        <taxon>Pterygota</taxon>
        <taxon>Neoptera</taxon>
        <taxon>Endopterygota</taxon>
        <taxon>Diptera</taxon>
        <taxon>Brachycera</taxon>
        <taxon>Muscomorpha</taxon>
        <taxon>Ephydroidea</taxon>
        <taxon>Drosophilidae</taxon>
        <taxon>Drosophila</taxon>
        <taxon>Sophophora</taxon>
    </lineage>
</organism>
<sequence>MDVLEMLRASASGSYNTIFSDAWCQYVSKQITATVYMYFALVMMSLLFIAWFLYFKRMARLRLRDEIARSISTVTNSSGDMRGLRFRKRDKMLFYGRRMLRKMKNVSGQMYSSGKGYKRRAVMRFARRILQLRRDNMPLEMRTVEPPAEYLEETIEGSDRVPPDALYMLQSIRIFGHFEKPVFLRLCKHTQLLELMAGDYLFKITDPDDSVYIVQSGMINVYISNADGSTLSLKTVRKGESVTSLLSFIDVLSGNPSYYKTVTAKAIEKSVVIRLPMQAFEEVFQDNPDVMIRVIQVIMIRLQRVLFTALRNYLGLNAELVQNHMRYKSVSTMSGPINSQTSQSSRQAPNGPPMVISQMNLMQSAVSGTGSSGVSVTVTRPPSSPSRHSREEHTLSDPNPNPDGSFHGTTNLFTEVHGDAPNADLFHQQQQQHSVGNLSTRRSSITLMAPDGSHSCLQTPGVTTSIDMRLVQSSAVDSLRKELGLSEEDSHIIEPFVELRELEPNVTLITEGNADDVCVWFVMTGTLAVYQSNQDATRAKQDKSDMLIHFVHPGEIVGGLAMLTGEASAYTIRSRSITRIAFIRRAAIYQIMRQRPRIVLDLGNGVVRRLSPLVRQCDYALDWIFLESGRAVYRQDESSDSTYIVLSGRMRSVITHPGGKKEIVGEYGKGDLVGIVEMITETSRTTTVMAVRDSELAKLPEGLFNAIKLRYPIVVTKLISFLSHRFLGSMQTRSGSGAPGAPVEANPVTHKYSTVALVPITDEVPMTPFTYELYHSLCAIGPVLRLTSDVVRKQLGSNIFEAANEYRLTSWLAQQEDRNIITLYQCDSSLSAWTQRCMRQADVILIVGLGDRSHLVGKFEREIDRLAMRTQKELVLLYPEASNAKPANTLSWLNARPWVTKHHHVLCVKRIFTRKSQYRINDLYSRVLLSEPNMHSDFSRLARWLTGNSIGLVLGGGGARGAAHIGMLKAIQEAGIPVDMVGGVSIGALMGALWCSERNITTVTQKAREWSKKMTKWFLQLLDLTYPITSMFSGREFNKTIHDTFGDVSIEDLWIPYFTLTTDITASCHRIHTNGSLWRYVRSSMSLSGYMPPLCDPKDGHLLLDGGYVNNLPADVMHNLGAAHIIAIDVGSQDDTDLTNYGDDLSGWWLLYKKWNPFTSPVKVPDLPDIQSRLAYVSCVRQLEEVKNSDYCEYIRPPIDKYKTLAFGSFDEIRDVGYVFGKNYFESMAKAGRLGRFNQWFNKEPPKRVNHASLNEYTFIDLAQIVCRLPETYAVNTAELFSEDEDCDGYISEPTTLNTDRRRIQVSRAGNSLSFSETEMDSDVELDLKLERKTDKSTQSSPPSNSRSDMRGKEEARHMSNWHWGVKHKDETGSGATEATKTQTGQEQELQQEQQDQGATAEQLVDKDKEENKENRSSPNNETKN</sequence>
<gene>
    <name type="primary">sws</name>
    <name type="ORF">CG2212</name>
</gene>
<name>SWS_DROME</name>
<evidence type="ECO:0000255" key="1"/>
<evidence type="ECO:0000255" key="2">
    <source>
        <dbReference type="PROSITE-ProRule" id="PRU01161"/>
    </source>
</evidence>
<evidence type="ECO:0000256" key="3">
    <source>
        <dbReference type="SAM" id="MobiDB-lite"/>
    </source>
</evidence>
<evidence type="ECO:0000269" key="4">
    <source>
    </source>
</evidence>
<evidence type="ECO:0000269" key="5">
    <source>
    </source>
</evidence>
<evidence type="ECO:0000269" key="6">
    <source>
    </source>
</evidence>
<evidence type="ECO:0000269" key="7">
    <source>
    </source>
</evidence>
<evidence type="ECO:0000303" key="8">
    <source ref="4"/>
</evidence>
<evidence type="ECO:0000305" key="9"/>
<feature type="chain" id="PRO_0000172527" description="Neuropathy target esterase sws">
    <location>
        <begin position="1"/>
        <end position="1425"/>
    </location>
</feature>
<feature type="topological domain" description="Lumenal" evidence="1">
    <location>
        <begin position="1"/>
        <end position="34"/>
    </location>
</feature>
<feature type="transmembrane region" description="Helical" evidence="1">
    <location>
        <begin position="35"/>
        <end position="55"/>
    </location>
</feature>
<feature type="topological domain" description="Cytoplasmic" evidence="1">
    <location>
        <begin position="56"/>
        <end position="1425"/>
    </location>
</feature>
<feature type="domain" description="PNPLA" evidence="2">
    <location>
        <begin position="952"/>
        <end position="1118"/>
    </location>
</feature>
<feature type="region of interest" description="Disordered" evidence="3">
    <location>
        <begin position="332"/>
        <end position="410"/>
    </location>
</feature>
<feature type="region of interest" description="Disordered" evidence="3">
    <location>
        <begin position="1330"/>
        <end position="1425"/>
    </location>
</feature>
<feature type="short sequence motif" description="GXGXXG" evidence="2">
    <location>
        <begin position="956"/>
        <end position="961"/>
    </location>
</feature>
<feature type="short sequence motif" description="GXSXG" evidence="2">
    <location>
        <begin position="983"/>
        <end position="987"/>
    </location>
</feature>
<feature type="short sequence motif" description="DGA/G" evidence="2">
    <location>
        <begin position="1105"/>
        <end position="1107"/>
    </location>
</feature>
<feature type="compositionally biased region" description="Polar residues" evidence="3">
    <location>
        <begin position="332"/>
        <end position="348"/>
    </location>
</feature>
<feature type="compositionally biased region" description="Polar residues" evidence="3">
    <location>
        <begin position="357"/>
        <end position="366"/>
    </location>
</feature>
<feature type="compositionally biased region" description="Low complexity" evidence="3">
    <location>
        <begin position="367"/>
        <end position="381"/>
    </location>
</feature>
<feature type="compositionally biased region" description="Low complexity" evidence="3">
    <location>
        <begin position="1337"/>
        <end position="1347"/>
    </location>
</feature>
<feature type="compositionally biased region" description="Basic and acidic residues" evidence="3">
    <location>
        <begin position="1348"/>
        <end position="1358"/>
    </location>
</feature>
<feature type="compositionally biased region" description="Low complexity" evidence="3">
    <location>
        <begin position="1380"/>
        <end position="1403"/>
    </location>
</feature>
<feature type="compositionally biased region" description="Basic and acidic residues" evidence="3">
    <location>
        <begin position="1404"/>
        <end position="1416"/>
    </location>
</feature>
<feature type="active site" description="Nucleophile" evidence="2">
    <location>
        <position position="985"/>
    </location>
</feature>
<feature type="active site" description="Proton acceptor" evidence="2">
    <location>
        <position position="1105"/>
    </location>
</feature>
<feature type="binding site">
    <location>
        <begin position="174"/>
        <end position="301"/>
    </location>
    <ligand>
        <name>a nucleoside 3',5'-cyclic phosphate</name>
        <dbReference type="ChEBI" id="CHEBI:58464"/>
        <label>1</label>
    </ligand>
</feature>
<feature type="binding site">
    <location>
        <begin position="482"/>
        <end position="609"/>
    </location>
    <ligand>
        <name>a nucleoside 3',5'-cyclic phosphate</name>
        <dbReference type="ChEBI" id="CHEBI:58464"/>
        <label>2</label>
    </ligand>
</feature>
<feature type="binding site">
    <location>
        <begin position="598"/>
        <end position="727"/>
    </location>
    <ligand>
        <name>a nucleoside 3',5'-cyclic phosphate</name>
        <dbReference type="ChEBI" id="CHEBI:58464"/>
        <label>3</label>
    </ligand>
</feature>
<feature type="modified residue" description="Phosphoserine" evidence="5">
    <location>
        <position position="444"/>
    </location>
</feature>
<feature type="modified residue" description="Phosphoserine" evidence="5">
    <location>
        <position position="453"/>
    </location>
</feature>
<feature type="modified residue" description="Phosphoserine" evidence="5">
    <location>
        <position position="1160"/>
    </location>
</feature>
<feature type="splice variant" id="VSP_038398" description="In isoform B." evidence="9">
    <location>
        <begin position="1"/>
        <end position="1084"/>
    </location>
</feature>
<feature type="splice variant" id="VSP_038399" description="In isoform B and isoform C." evidence="8">
    <original>LSGYMPPLCDPK</original>
    <variation>IAGVFPPFCDYR</variation>
    <location>
        <begin position="1087"/>
        <end position="1098"/>
    </location>
</feature>
<feature type="splice variant" id="VSP_038400" description="In isoform B and isoform C." evidence="8">
    <original>GYVNNL</original>
    <variation>CYTNNV</variation>
    <location>
        <begin position="1107"/>
        <end position="1112"/>
    </location>
</feature>
<feature type="mutagenesis site" description="Has no effect on nervous system function but reduces binding to Pka-C3." evidence="6">
    <original>R</original>
    <variation>A</variation>
    <location>
        <position position="133"/>
    </location>
</feature>
<feature type="mutagenesis site" description="In allele sws-5; age-dependent neurodegeneration." evidence="7">
    <original>G</original>
    <variation>R</variation>
    <location>
        <position position="648"/>
    </location>
</feature>
<feature type="mutagenesis site" description="In allele sws-4; age-dependent neurodegeneration." evidence="7">
    <original>G</original>
    <variation>D</variation>
    <location>
        <position position="956"/>
    </location>
</feature>
<feature type="mutagenesis site" description="Loss of enzymatic activity." evidence="4">
    <original>S</original>
    <variation>D</variation>
    <location>
        <position position="985"/>
    </location>
</feature>
<feature type="sequence conflict" description="In Ref. 1; CAB51772." evidence="9" ref="1">
    <original>I</original>
    <variation>T</variation>
    <location>
        <position position="18"/>
    </location>
</feature>
<feature type="sequence conflict" description="In Ref. 4; ABV82201." evidence="9" ref="4">
    <original>L</original>
    <variation>F</variation>
    <location>
        <position position="314"/>
    </location>
</feature>
<feature type="sequence conflict" description="In Ref. 1; CAB51772." evidence="9" ref="1">
    <original>G</original>
    <variation>P</variation>
    <location>
        <position position="452"/>
    </location>
</feature>
<feature type="sequence conflict" description="In Ref. 1; CAB51772." evidence="9" ref="1">
    <original>R</original>
    <variation>H</variation>
    <location>
        <position position="785"/>
    </location>
</feature>
<feature type="sequence conflict" description="In Ref. 4; ABV82201." evidence="9" ref="4">
    <original>S</original>
    <variation>H</variation>
    <location>
        <position position="1076"/>
    </location>
</feature>
<feature type="sequence conflict" description="In Ref. 4; ABV82201." evidence="9" ref="4">
    <original>VRS</original>
    <variation>CRA</variation>
    <location>
        <begin position="1081"/>
        <end position="1083"/>
    </location>
</feature>
<feature type="sequence conflict" description="In Ref. 1; CAB51772." evidence="9" ref="1">
    <original>T</original>
    <variation>N</variation>
    <location>
        <position position="1377"/>
    </location>
</feature>
<reference key="1">
    <citation type="journal article" date="1997" name="J. Neurosci.">
        <title>The swiss cheese mutant causes glial hyperwrapping and brain degeneration in Drosophila.</title>
        <authorList>
            <person name="Kretzschmar D."/>
            <person name="Hasan G."/>
            <person name="Sharma S."/>
            <person name="Heisenberg M."/>
            <person name="Benzer S."/>
        </authorList>
    </citation>
    <scope>NUCLEOTIDE SEQUENCE [MRNA] (ISOFORM A)</scope>
    <scope>FUNCTION</scope>
    <scope>ALTERNATIVE SPLICING</scope>
    <scope>TISSUE SPECIFICITY</scope>
    <scope>DEVELOPMENTAL STAGE</scope>
    <scope>MUTAGENESIS OF GLY-648 AND GLY-956</scope>
</reference>
<reference key="2">
    <citation type="journal article" date="2000" name="Science">
        <title>The genome sequence of Drosophila melanogaster.</title>
        <authorList>
            <person name="Adams M.D."/>
            <person name="Celniker S.E."/>
            <person name="Holt R.A."/>
            <person name="Evans C.A."/>
            <person name="Gocayne J.D."/>
            <person name="Amanatides P.G."/>
            <person name="Scherer S.E."/>
            <person name="Li P.W."/>
            <person name="Hoskins R.A."/>
            <person name="Galle R.F."/>
            <person name="George R.A."/>
            <person name="Lewis S.E."/>
            <person name="Richards S."/>
            <person name="Ashburner M."/>
            <person name="Henderson S.N."/>
            <person name="Sutton G.G."/>
            <person name="Wortman J.R."/>
            <person name="Yandell M.D."/>
            <person name="Zhang Q."/>
            <person name="Chen L.X."/>
            <person name="Brandon R.C."/>
            <person name="Rogers Y.-H.C."/>
            <person name="Blazej R.G."/>
            <person name="Champe M."/>
            <person name="Pfeiffer B.D."/>
            <person name="Wan K.H."/>
            <person name="Doyle C."/>
            <person name="Baxter E.G."/>
            <person name="Helt G."/>
            <person name="Nelson C.R."/>
            <person name="Miklos G.L.G."/>
            <person name="Abril J.F."/>
            <person name="Agbayani A."/>
            <person name="An H.-J."/>
            <person name="Andrews-Pfannkoch C."/>
            <person name="Baldwin D."/>
            <person name="Ballew R.M."/>
            <person name="Basu A."/>
            <person name="Baxendale J."/>
            <person name="Bayraktaroglu L."/>
            <person name="Beasley E.M."/>
            <person name="Beeson K.Y."/>
            <person name="Benos P.V."/>
            <person name="Berman B.P."/>
            <person name="Bhandari D."/>
            <person name="Bolshakov S."/>
            <person name="Borkova D."/>
            <person name="Botchan M.R."/>
            <person name="Bouck J."/>
            <person name="Brokstein P."/>
            <person name="Brottier P."/>
            <person name="Burtis K.C."/>
            <person name="Busam D.A."/>
            <person name="Butler H."/>
            <person name="Cadieu E."/>
            <person name="Center A."/>
            <person name="Chandra I."/>
            <person name="Cherry J.M."/>
            <person name="Cawley S."/>
            <person name="Dahlke C."/>
            <person name="Davenport L.B."/>
            <person name="Davies P."/>
            <person name="de Pablos B."/>
            <person name="Delcher A."/>
            <person name="Deng Z."/>
            <person name="Mays A.D."/>
            <person name="Dew I."/>
            <person name="Dietz S.M."/>
            <person name="Dodson K."/>
            <person name="Doup L.E."/>
            <person name="Downes M."/>
            <person name="Dugan-Rocha S."/>
            <person name="Dunkov B.C."/>
            <person name="Dunn P."/>
            <person name="Durbin K.J."/>
            <person name="Evangelista C.C."/>
            <person name="Ferraz C."/>
            <person name="Ferriera S."/>
            <person name="Fleischmann W."/>
            <person name="Fosler C."/>
            <person name="Gabrielian A.E."/>
            <person name="Garg N.S."/>
            <person name="Gelbart W.M."/>
            <person name="Glasser K."/>
            <person name="Glodek A."/>
            <person name="Gong F."/>
            <person name="Gorrell J.H."/>
            <person name="Gu Z."/>
            <person name="Guan P."/>
            <person name="Harris M."/>
            <person name="Harris N.L."/>
            <person name="Harvey D.A."/>
            <person name="Heiman T.J."/>
            <person name="Hernandez J.R."/>
            <person name="Houck J."/>
            <person name="Hostin D."/>
            <person name="Houston K.A."/>
            <person name="Howland T.J."/>
            <person name="Wei M.-H."/>
            <person name="Ibegwam C."/>
            <person name="Jalali M."/>
            <person name="Kalush F."/>
            <person name="Karpen G.H."/>
            <person name="Ke Z."/>
            <person name="Kennison J.A."/>
            <person name="Ketchum K.A."/>
            <person name="Kimmel B.E."/>
            <person name="Kodira C.D."/>
            <person name="Kraft C.L."/>
            <person name="Kravitz S."/>
            <person name="Kulp D."/>
            <person name="Lai Z."/>
            <person name="Lasko P."/>
            <person name="Lei Y."/>
            <person name="Levitsky A.A."/>
            <person name="Li J.H."/>
            <person name="Li Z."/>
            <person name="Liang Y."/>
            <person name="Lin X."/>
            <person name="Liu X."/>
            <person name="Mattei B."/>
            <person name="McIntosh T.C."/>
            <person name="McLeod M.P."/>
            <person name="McPherson D."/>
            <person name="Merkulov G."/>
            <person name="Milshina N.V."/>
            <person name="Mobarry C."/>
            <person name="Morris J."/>
            <person name="Moshrefi A."/>
            <person name="Mount S.M."/>
            <person name="Moy M."/>
            <person name="Murphy B."/>
            <person name="Murphy L."/>
            <person name="Muzny D.M."/>
            <person name="Nelson D.L."/>
            <person name="Nelson D.R."/>
            <person name="Nelson K.A."/>
            <person name="Nixon K."/>
            <person name="Nusskern D.R."/>
            <person name="Pacleb J.M."/>
            <person name="Palazzolo M."/>
            <person name="Pittman G.S."/>
            <person name="Pan S."/>
            <person name="Pollard J."/>
            <person name="Puri V."/>
            <person name="Reese M.G."/>
            <person name="Reinert K."/>
            <person name="Remington K."/>
            <person name="Saunders R.D.C."/>
            <person name="Scheeler F."/>
            <person name="Shen H."/>
            <person name="Shue B.C."/>
            <person name="Siden-Kiamos I."/>
            <person name="Simpson M."/>
            <person name="Skupski M.P."/>
            <person name="Smith T.J."/>
            <person name="Spier E."/>
            <person name="Spradling A.C."/>
            <person name="Stapleton M."/>
            <person name="Strong R."/>
            <person name="Sun E."/>
            <person name="Svirskas R."/>
            <person name="Tector C."/>
            <person name="Turner R."/>
            <person name="Venter E."/>
            <person name="Wang A.H."/>
            <person name="Wang X."/>
            <person name="Wang Z.-Y."/>
            <person name="Wassarman D.A."/>
            <person name="Weinstock G.M."/>
            <person name="Weissenbach J."/>
            <person name="Williams S.M."/>
            <person name="Woodage T."/>
            <person name="Worley K.C."/>
            <person name="Wu D."/>
            <person name="Yang S."/>
            <person name="Yao Q.A."/>
            <person name="Ye J."/>
            <person name="Yeh R.-F."/>
            <person name="Zaveri J.S."/>
            <person name="Zhan M."/>
            <person name="Zhang G."/>
            <person name="Zhao Q."/>
            <person name="Zheng L."/>
            <person name="Zheng X.H."/>
            <person name="Zhong F.N."/>
            <person name="Zhong W."/>
            <person name="Zhou X."/>
            <person name="Zhu S.C."/>
            <person name="Zhu X."/>
            <person name="Smith H.O."/>
            <person name="Gibbs R.A."/>
            <person name="Myers E.W."/>
            <person name="Rubin G.M."/>
            <person name="Venter J.C."/>
        </authorList>
    </citation>
    <scope>NUCLEOTIDE SEQUENCE [LARGE SCALE GENOMIC DNA]</scope>
    <source>
        <strain>Berkeley</strain>
    </source>
</reference>
<reference key="3">
    <citation type="journal article" date="2002" name="Genome Biol.">
        <title>Annotation of the Drosophila melanogaster euchromatic genome: a systematic review.</title>
        <authorList>
            <person name="Misra S."/>
            <person name="Crosby M.A."/>
            <person name="Mungall C.J."/>
            <person name="Matthews B.B."/>
            <person name="Campbell K.S."/>
            <person name="Hradecky P."/>
            <person name="Huang Y."/>
            <person name="Kaminker J.S."/>
            <person name="Millburn G.H."/>
            <person name="Prochnik S.E."/>
            <person name="Smith C.D."/>
            <person name="Tupy J.L."/>
            <person name="Whitfield E.J."/>
            <person name="Bayraktaroglu L."/>
            <person name="Berman B.P."/>
            <person name="Bettencourt B.R."/>
            <person name="Celniker S.E."/>
            <person name="de Grey A.D.N.J."/>
            <person name="Drysdale R.A."/>
            <person name="Harris N.L."/>
            <person name="Richter J."/>
            <person name="Russo S."/>
            <person name="Schroeder A.J."/>
            <person name="Shu S.Q."/>
            <person name="Stapleton M."/>
            <person name="Yamada C."/>
            <person name="Ashburner M."/>
            <person name="Gelbart W.M."/>
            <person name="Rubin G.M."/>
            <person name="Lewis S.E."/>
        </authorList>
    </citation>
    <scope>GENOME REANNOTATION</scope>
    <scope>ALTERNATIVE SPLICING</scope>
    <source>
        <strain>Berkeley</strain>
    </source>
</reference>
<reference key="4">
    <citation type="submission" date="2007-10" db="EMBL/GenBank/DDBJ databases">
        <authorList>
            <person name="Stapleton M."/>
            <person name="Carlson J.W."/>
            <person name="Frise E."/>
            <person name="Kapadia B."/>
            <person name="Park S."/>
            <person name="Wan K.H."/>
            <person name="Yu C."/>
            <person name="Celniker S.E."/>
        </authorList>
    </citation>
    <scope>NUCLEOTIDE SEQUENCE [LARGE SCALE MRNA] (ISOFORM C)</scope>
    <source>
        <strain>Berkeley</strain>
        <tissue>Head</tissue>
    </source>
</reference>
<reference key="5">
    <citation type="journal article" date="2002" name="Genome Biol.">
        <title>A Drosophila full-length cDNA resource.</title>
        <authorList>
            <person name="Stapleton M."/>
            <person name="Carlson J.W."/>
            <person name="Brokstein P."/>
            <person name="Yu C."/>
            <person name="Champe M."/>
            <person name="George R.A."/>
            <person name="Guarin H."/>
            <person name="Kronmiller B."/>
            <person name="Pacleb J.M."/>
            <person name="Park S."/>
            <person name="Wan K.H."/>
            <person name="Rubin G.M."/>
            <person name="Celniker S.E."/>
        </authorList>
    </citation>
    <scope>NUCLEOTIDE SEQUENCE [LARGE SCALE MRNA] OF 1052-1425 (ISOFORM A)</scope>
    <source>
        <strain>Berkeley</strain>
        <tissue>Embryo</tissue>
    </source>
</reference>
<reference key="6">
    <citation type="journal article" date="2005" name="J. Neurosci.">
        <title>Loss of swiss cheese/neuropathy target esterase activity causes disruption of phosphatidylcholine homeostasis and neuronal and glial death in adult Drosophila.</title>
        <authorList>
            <person name="Muehlig-Versen M."/>
            <person name="da Cruz A.B."/>
            <person name="Tschaepe J.-A."/>
            <person name="Moser M."/>
            <person name="Buettner R."/>
            <person name="Athenstaedt K."/>
            <person name="Glynn P."/>
            <person name="Kretzschmar D."/>
        </authorList>
    </citation>
    <scope>FUNCTION</scope>
    <scope>CATALYTIC ACTIVITY</scope>
    <scope>SUBCELLULAR LOCATION</scope>
    <scope>TISSUE SPECIFICITY</scope>
    <scope>MUTAGENESIS OF SER-985</scope>
</reference>
<reference key="7">
    <citation type="journal article" date="2008" name="J. Neurosci.">
        <title>Swiss cheese, a protein involved in progressive neurodegeneration, acts as a noncanonical regulatory subunit for PKA-C3.</title>
        <authorList>
            <person name="Bettencourt da Cruz A."/>
            <person name="Wentzell J."/>
            <person name="Kretzschmar D."/>
        </authorList>
    </citation>
    <scope>FUNCTION</scope>
    <scope>INTERACTION WITH PKA-C3</scope>
    <scope>SUBCELLULAR LOCATION</scope>
    <scope>TISSUE SPECIFICITY</scope>
    <scope>DISRUPTION PHENOTYPE</scope>
    <scope>MUTAGENESIS OF ARG-133</scope>
</reference>
<reference key="8">
    <citation type="journal article" date="2008" name="J. Proteome Res.">
        <title>Phosphoproteome analysis of Drosophila melanogaster embryos.</title>
        <authorList>
            <person name="Zhai B."/>
            <person name="Villen J."/>
            <person name="Beausoleil S.A."/>
            <person name="Mintseris J."/>
            <person name="Gygi S.P."/>
        </authorList>
    </citation>
    <scope>PHOSPHORYLATION [LARGE SCALE ANALYSIS] AT SER-444; SER-453 AND SER-1160</scope>
    <scope>IDENTIFICATION BY MASS SPECTROMETRY</scope>
    <source>
        <tissue>Embryo</tissue>
    </source>
</reference>
<proteinExistence type="evidence at protein level"/>
<protein>
    <recommendedName>
        <fullName>Neuropathy target esterase sws</fullName>
    </recommendedName>
    <alternativeName>
        <fullName>Swiss cheese</fullName>
        <shortName>DSWS</shortName>
        <ecNumber>3.1.1.5</ecNumber>
    </alternativeName>
</protein>
<accession>Q9U969</accession>
<accession>A8E6M7</accession>
<accession>Q8IRN7</accession>
<accession>Q95RE9</accession>
<accession>Q9W3M0</accession>